<gene>
    <name evidence="1" type="primary">accD</name>
    <name type="ordered locus">HNE_3473</name>
</gene>
<keyword id="KW-0067">ATP-binding</keyword>
<keyword id="KW-0963">Cytoplasm</keyword>
<keyword id="KW-0275">Fatty acid biosynthesis</keyword>
<keyword id="KW-0276">Fatty acid metabolism</keyword>
<keyword id="KW-0444">Lipid biosynthesis</keyword>
<keyword id="KW-0443">Lipid metabolism</keyword>
<keyword id="KW-0547">Nucleotide-binding</keyword>
<keyword id="KW-1185">Reference proteome</keyword>
<keyword id="KW-0808">Transferase</keyword>
<evidence type="ECO:0000255" key="1">
    <source>
        <dbReference type="HAMAP-Rule" id="MF_01395"/>
    </source>
</evidence>
<evidence type="ECO:0000255" key="2">
    <source>
        <dbReference type="PROSITE-ProRule" id="PRU01136"/>
    </source>
</evidence>
<evidence type="ECO:0000256" key="3">
    <source>
        <dbReference type="SAM" id="MobiDB-lite"/>
    </source>
</evidence>
<comment type="function">
    <text evidence="1">Component of the acetyl coenzyme A carboxylase (ACC) complex. Biotin carboxylase (BC) catalyzes the carboxylation of biotin on its carrier protein (BCCP) and then the CO(2) group is transferred by the transcarboxylase to acetyl-CoA to form malonyl-CoA.</text>
</comment>
<comment type="catalytic activity">
    <reaction evidence="1">
        <text>N(6)-carboxybiotinyl-L-lysyl-[protein] + acetyl-CoA = N(6)-biotinyl-L-lysyl-[protein] + malonyl-CoA</text>
        <dbReference type="Rhea" id="RHEA:54728"/>
        <dbReference type="Rhea" id="RHEA-COMP:10505"/>
        <dbReference type="Rhea" id="RHEA-COMP:10506"/>
        <dbReference type="ChEBI" id="CHEBI:57288"/>
        <dbReference type="ChEBI" id="CHEBI:57384"/>
        <dbReference type="ChEBI" id="CHEBI:83144"/>
        <dbReference type="ChEBI" id="CHEBI:83145"/>
        <dbReference type="EC" id="2.1.3.15"/>
    </reaction>
</comment>
<comment type="pathway">
    <text evidence="1">Lipid metabolism; malonyl-CoA biosynthesis; malonyl-CoA from acetyl-CoA: step 1/1.</text>
</comment>
<comment type="subunit">
    <text evidence="1">Acetyl-CoA carboxylase is a heterohexamer composed of biotin carboxyl carrier protein (AccB), biotin carboxylase (AccC) and two subunits each of ACCase subunit alpha (AccA) and ACCase subunit beta (AccD).</text>
</comment>
<comment type="subcellular location">
    <subcellularLocation>
        <location evidence="1">Cytoplasm</location>
    </subcellularLocation>
</comment>
<comment type="similarity">
    <text evidence="1">Belongs to the AccD/PCCB family.</text>
</comment>
<organism>
    <name type="scientific">Hyphomonas neptunium (strain ATCC 15444)</name>
    <dbReference type="NCBI Taxonomy" id="228405"/>
    <lineage>
        <taxon>Bacteria</taxon>
        <taxon>Pseudomonadati</taxon>
        <taxon>Pseudomonadota</taxon>
        <taxon>Alphaproteobacteria</taxon>
        <taxon>Hyphomonadales</taxon>
        <taxon>Hyphomonadaceae</taxon>
        <taxon>Hyphomonas</taxon>
    </lineage>
</organism>
<proteinExistence type="inferred from homology"/>
<feature type="chain" id="PRO_0000389758" description="Acetyl-coenzyme A carboxylase carboxyl transferase subunit beta">
    <location>
        <begin position="1"/>
        <end position="326"/>
    </location>
</feature>
<feature type="domain" description="CoA carboxyltransferase N-terminal" evidence="2">
    <location>
        <begin position="25"/>
        <end position="308"/>
    </location>
</feature>
<feature type="region of interest" description="Disordered" evidence="3">
    <location>
        <begin position="298"/>
        <end position="326"/>
    </location>
</feature>
<feature type="compositionally biased region" description="Basic and acidic residues" evidence="3">
    <location>
        <begin position="317"/>
        <end position="326"/>
    </location>
</feature>
<sequence length="326" mass="35843">MNWINKVTPPGLKTMMSKKDTPDDLWVKCPASGELIYRNDLEQSWYVTPAGAHLRISPRMRFRILFDDERWEPISLPQVPLDPLKFKDDKPYPARLKAAKAKILNRDIKETEDGGAPLLQEDCMVAAYGKIGGVPAVVLVQDFEFMGGSLGMAAGEAFITAAQLALARKSAFVVCTASGGARMQEGTLSLMQMPRTTLAINDLADAKLPYVVVLTDPTSGGVSASYAMLGDVHIAEPGAMIAFSGPRVIEQTIRESLPKGFQRSEFLREKGQVDIVVDRRKLKATVARVLGHLLPMSRRRDDRSTLQLTPPKTHAPKPPEPKVKPD</sequence>
<dbReference type="EC" id="2.1.3.15" evidence="1"/>
<dbReference type="EMBL" id="CP000158">
    <property type="protein sequence ID" value="ABI75588.1"/>
    <property type="molecule type" value="Genomic_DNA"/>
</dbReference>
<dbReference type="RefSeq" id="WP_011648439.1">
    <property type="nucleotide sequence ID" value="NC_008358.1"/>
</dbReference>
<dbReference type="SMR" id="Q0BWJ8"/>
<dbReference type="STRING" id="228405.HNE_3473"/>
<dbReference type="KEGG" id="hne:HNE_3473"/>
<dbReference type="eggNOG" id="COG0777">
    <property type="taxonomic scope" value="Bacteria"/>
</dbReference>
<dbReference type="HOGENOM" id="CLU_015486_1_0_5"/>
<dbReference type="UniPathway" id="UPA00655">
    <property type="reaction ID" value="UER00711"/>
</dbReference>
<dbReference type="Proteomes" id="UP000001959">
    <property type="component" value="Chromosome"/>
</dbReference>
<dbReference type="GO" id="GO:0009329">
    <property type="term" value="C:acetate CoA-transferase complex"/>
    <property type="evidence" value="ECO:0007669"/>
    <property type="project" value="TreeGrafter"/>
</dbReference>
<dbReference type="GO" id="GO:0003989">
    <property type="term" value="F:acetyl-CoA carboxylase activity"/>
    <property type="evidence" value="ECO:0007669"/>
    <property type="project" value="InterPro"/>
</dbReference>
<dbReference type="GO" id="GO:0005524">
    <property type="term" value="F:ATP binding"/>
    <property type="evidence" value="ECO:0007669"/>
    <property type="project" value="UniProtKB-KW"/>
</dbReference>
<dbReference type="GO" id="GO:0016743">
    <property type="term" value="F:carboxyl- or carbamoyltransferase activity"/>
    <property type="evidence" value="ECO:0007669"/>
    <property type="project" value="UniProtKB-UniRule"/>
</dbReference>
<dbReference type="GO" id="GO:0006633">
    <property type="term" value="P:fatty acid biosynthetic process"/>
    <property type="evidence" value="ECO:0007669"/>
    <property type="project" value="UniProtKB-KW"/>
</dbReference>
<dbReference type="GO" id="GO:2001295">
    <property type="term" value="P:malonyl-CoA biosynthetic process"/>
    <property type="evidence" value="ECO:0007669"/>
    <property type="project" value="UniProtKB-UniRule"/>
</dbReference>
<dbReference type="Gene3D" id="3.90.226.10">
    <property type="entry name" value="2-enoyl-CoA Hydratase, Chain A, domain 1"/>
    <property type="match status" value="1"/>
</dbReference>
<dbReference type="HAMAP" id="MF_01395">
    <property type="entry name" value="AcetylCoA_CT_beta"/>
    <property type="match status" value="1"/>
</dbReference>
<dbReference type="InterPro" id="IPR034733">
    <property type="entry name" value="AcCoA_carboxyl_beta"/>
</dbReference>
<dbReference type="InterPro" id="IPR000438">
    <property type="entry name" value="Acetyl_CoA_COase_Trfase_b_su"/>
</dbReference>
<dbReference type="InterPro" id="IPR029045">
    <property type="entry name" value="ClpP/crotonase-like_dom_sf"/>
</dbReference>
<dbReference type="InterPro" id="IPR011762">
    <property type="entry name" value="COA_CT_N"/>
</dbReference>
<dbReference type="PANTHER" id="PTHR42995">
    <property type="entry name" value="ACETYL-COENZYME A CARBOXYLASE CARBOXYL TRANSFERASE SUBUNIT BETA, CHLOROPLASTIC"/>
    <property type="match status" value="1"/>
</dbReference>
<dbReference type="PANTHER" id="PTHR42995:SF5">
    <property type="entry name" value="ACETYL-COENZYME A CARBOXYLASE CARBOXYL TRANSFERASE SUBUNIT BETA, CHLOROPLASTIC"/>
    <property type="match status" value="1"/>
</dbReference>
<dbReference type="Pfam" id="PF01039">
    <property type="entry name" value="Carboxyl_trans"/>
    <property type="match status" value="1"/>
</dbReference>
<dbReference type="PRINTS" id="PR01070">
    <property type="entry name" value="ACCCTRFRASEB"/>
</dbReference>
<dbReference type="SUPFAM" id="SSF52096">
    <property type="entry name" value="ClpP/crotonase"/>
    <property type="match status" value="1"/>
</dbReference>
<dbReference type="PROSITE" id="PS50980">
    <property type="entry name" value="COA_CT_NTER"/>
    <property type="match status" value="1"/>
</dbReference>
<protein>
    <recommendedName>
        <fullName evidence="1">Acetyl-coenzyme A carboxylase carboxyl transferase subunit beta</fullName>
        <shortName evidence="1">ACCase subunit beta</shortName>
        <shortName evidence="1">Acetyl-CoA carboxylase carboxyltransferase subunit beta</shortName>
        <ecNumber evidence="1">2.1.3.15</ecNumber>
    </recommendedName>
</protein>
<accession>Q0BWJ8</accession>
<name>ACCD_HYPNA</name>
<reference key="1">
    <citation type="journal article" date="2006" name="J. Bacteriol.">
        <title>Comparative genomic evidence for a close relationship between the dimorphic prosthecate bacteria Hyphomonas neptunium and Caulobacter crescentus.</title>
        <authorList>
            <person name="Badger J.H."/>
            <person name="Hoover T.R."/>
            <person name="Brun Y.V."/>
            <person name="Weiner R.M."/>
            <person name="Laub M.T."/>
            <person name="Alexandre G."/>
            <person name="Mrazek J."/>
            <person name="Ren Q."/>
            <person name="Paulsen I.T."/>
            <person name="Nelson K.E."/>
            <person name="Khouri H.M."/>
            <person name="Radune D."/>
            <person name="Sosa J."/>
            <person name="Dodson R.J."/>
            <person name="Sullivan S.A."/>
            <person name="Rosovitz M.J."/>
            <person name="Madupu R."/>
            <person name="Brinkac L.M."/>
            <person name="Durkin A.S."/>
            <person name="Daugherty S.C."/>
            <person name="Kothari S.P."/>
            <person name="Giglio M.G."/>
            <person name="Zhou L."/>
            <person name="Haft D.H."/>
            <person name="Selengut J.D."/>
            <person name="Davidsen T.M."/>
            <person name="Yang Q."/>
            <person name="Zafar N."/>
            <person name="Ward N.L."/>
        </authorList>
    </citation>
    <scope>NUCLEOTIDE SEQUENCE [LARGE SCALE GENOMIC DNA]</scope>
    <source>
        <strain>ATCC 15444</strain>
    </source>
</reference>